<gene>
    <name evidence="1" type="primary">gL</name>
    <name type="ORF">MDV013</name>
</gene>
<name>GL_GAHVM</name>
<organismHost>
    <name type="scientific">Gallus gallus</name>
    <name type="common">Chicken</name>
    <dbReference type="NCBI Taxonomy" id="9031"/>
</organismHost>
<evidence type="ECO:0000255" key="1">
    <source>
        <dbReference type="HAMAP-Rule" id="MF_04034"/>
    </source>
</evidence>
<evidence type="ECO:0000255" key="2">
    <source>
        <dbReference type="PROSITE-ProRule" id="PRU01368"/>
    </source>
</evidence>
<proteinExistence type="inferred from homology"/>
<protein>
    <recommendedName>
        <fullName evidence="1">Envelope glycoprotein L</fullName>
        <shortName evidence="1">gL</shortName>
    </recommendedName>
</protein>
<feature type="signal peptide" evidence="1">
    <location>
        <begin position="1"/>
        <end position="25"/>
    </location>
</feature>
<feature type="chain" id="PRO_0000406569" description="Envelope glycoprotein L" evidence="1">
    <location>
        <begin position="26"/>
        <end position="195"/>
    </location>
</feature>
<feature type="domain" description="gL alphaherpesvirus-type" evidence="2">
    <location>
        <begin position="28"/>
        <end position="195"/>
    </location>
</feature>
<feature type="region of interest" description="Interaction with gH" evidence="1">
    <location>
        <begin position="28"/>
        <end position="157"/>
    </location>
</feature>
<feature type="disulfide bond" evidence="2">
    <location>
        <begin position="49"/>
        <end position="78"/>
    </location>
</feature>
<feature type="disulfide bond" evidence="2">
    <location>
        <begin position="156"/>
        <end position="178"/>
    </location>
</feature>
<sequence length="195" mass="21684">MKIYRVLVHLSFVLGMFTKTNTVLAWSKYDLVHGFMRVANISSIMRLDCLPNLLSSNAGYAALPSDDIPTGIFIKVNCSIPEFILWYEQKAMAAWINPIMGTVLMMNDVLKSGLENSVKVGLLTFLKRIAEKGPNGPLRNRGSGCINLIAPADISCYGSTRLDRFNRDFEDDSRGMPCRAKAMRRTTSGSRRANA</sequence>
<comment type="function">
    <text evidence="1">The heterodimer glycoprotein H-glycoprotein L is required for the fusion of viral and plasma membranes leading to virus entry into the host cell. Acts as a functional inhibitor of gH and maintains gH in an inhibited form. Upon binding to host integrins, gL dissociates from gH leading to activation of the viral fusion glycoproteins gB and gH.</text>
</comment>
<comment type="subunit">
    <text evidence="1">Interacts with glycoprotein H (gH); this interaction is necessary for the correct processing and cell surface expression of gH. The heterodimer gH/gL seems to interact with gB trimers during fusion.</text>
</comment>
<comment type="subcellular location">
    <subcellularLocation>
        <location evidence="1">Virion membrane</location>
        <topology evidence="1">Peripheral membrane protein</topology>
        <orientation evidence="1">Extracellular side</orientation>
    </subcellularLocation>
    <subcellularLocation>
        <location evidence="1">Host cell membrane</location>
        <topology evidence="1">Peripheral membrane protein</topology>
        <orientation evidence="1">Extracellular side</orientation>
    </subcellularLocation>
    <subcellularLocation>
        <location evidence="1">Host Golgi apparatus</location>
        <location evidence="1">Host trans-Golgi network</location>
    </subcellularLocation>
    <text evidence="1">gL associates with the extravirion surface through its binding to gH. During virion morphogenesis, this protein probably accumulates in the host trans-Golgi where secondary envelopment occurs.</text>
</comment>
<comment type="similarity">
    <text evidence="2">Belongs to the herpesviridae glycoprotein L (gL) family. Alphaherpesvirinae gL subfamily.</text>
</comment>
<reference key="1">
    <citation type="journal article" date="2000" name="J. Virol.">
        <title>The genome of a very virulent Marek's disease virus.</title>
        <authorList>
            <person name="Tulman E.R."/>
            <person name="Afonso C.L."/>
            <person name="Lu Z."/>
            <person name="Zsak L."/>
            <person name="Rock D.L."/>
            <person name="Kutish G.F."/>
        </authorList>
    </citation>
    <scope>NUCLEOTIDE SEQUENCE [LARGE SCALE GENOMIC DNA]</scope>
</reference>
<dbReference type="EMBL" id="AF243438">
    <property type="protein sequence ID" value="AAG14193.1"/>
    <property type="molecule type" value="Genomic_DNA"/>
</dbReference>
<dbReference type="RefSeq" id="YP_001033929.1">
    <property type="nucleotide sequence ID" value="NC_002229.3"/>
</dbReference>
<dbReference type="GeneID" id="4811474"/>
<dbReference type="KEGG" id="vg:4811474"/>
<dbReference type="Proteomes" id="UP000008072">
    <property type="component" value="Segment"/>
</dbReference>
<dbReference type="GO" id="GO:0044177">
    <property type="term" value="C:host cell Golgi apparatus"/>
    <property type="evidence" value="ECO:0007669"/>
    <property type="project" value="UniProtKB-SubCell"/>
</dbReference>
<dbReference type="GO" id="GO:0020002">
    <property type="term" value="C:host cell plasma membrane"/>
    <property type="evidence" value="ECO:0007669"/>
    <property type="project" value="UniProtKB-SubCell"/>
</dbReference>
<dbReference type="GO" id="GO:0016020">
    <property type="term" value="C:membrane"/>
    <property type="evidence" value="ECO:0007669"/>
    <property type="project" value="UniProtKB-KW"/>
</dbReference>
<dbReference type="GO" id="GO:0019031">
    <property type="term" value="C:viral envelope"/>
    <property type="evidence" value="ECO:0007669"/>
    <property type="project" value="UniProtKB-KW"/>
</dbReference>
<dbReference type="GO" id="GO:0055036">
    <property type="term" value="C:virion membrane"/>
    <property type="evidence" value="ECO:0007669"/>
    <property type="project" value="UniProtKB-SubCell"/>
</dbReference>
<dbReference type="GO" id="GO:0019064">
    <property type="term" value="P:fusion of virus membrane with host plasma membrane"/>
    <property type="evidence" value="ECO:0007669"/>
    <property type="project" value="UniProtKB-KW"/>
</dbReference>
<dbReference type="GO" id="GO:0046718">
    <property type="term" value="P:symbiont entry into host cell"/>
    <property type="evidence" value="ECO:0007669"/>
    <property type="project" value="UniProtKB-KW"/>
</dbReference>
<dbReference type="Gene3D" id="3.30.390.170">
    <property type="match status" value="1"/>
</dbReference>
<dbReference type="HAMAP" id="MF_04034">
    <property type="entry name" value="HSV_GL_alphagamma"/>
    <property type="match status" value="1"/>
</dbReference>
<dbReference type="InterPro" id="IPR022200">
    <property type="entry name" value="Herpes_gL_C"/>
</dbReference>
<dbReference type="InterPro" id="IPR007923">
    <property type="entry name" value="Herpes_gL_N"/>
</dbReference>
<dbReference type="InterPro" id="IPR038311">
    <property type="entry name" value="Herpes_gL_N_sf"/>
</dbReference>
<dbReference type="InterPro" id="IPR034708">
    <property type="entry name" value="HSV_GL_alphagamma"/>
</dbReference>
<dbReference type="Pfam" id="PF12524">
    <property type="entry name" value="GlyL_C"/>
    <property type="match status" value="1"/>
</dbReference>
<dbReference type="Pfam" id="PF05259">
    <property type="entry name" value="Herpes_UL1"/>
    <property type="match status" value="1"/>
</dbReference>
<dbReference type="PROSITE" id="PS52024">
    <property type="entry name" value="GL_AHV"/>
    <property type="match status" value="1"/>
</dbReference>
<keyword id="KW-1015">Disulfide bond</keyword>
<keyword id="KW-1169">Fusion of virus membrane with host cell membrane</keyword>
<keyword id="KW-1168">Fusion of virus membrane with host membrane</keyword>
<keyword id="KW-0325">Glycoprotein</keyword>
<keyword id="KW-1032">Host cell membrane</keyword>
<keyword id="KW-1040">Host Golgi apparatus</keyword>
<keyword id="KW-1043">Host membrane</keyword>
<keyword id="KW-0472">Membrane</keyword>
<keyword id="KW-1185">Reference proteome</keyword>
<keyword id="KW-0732">Signal</keyword>
<keyword id="KW-0261">Viral envelope protein</keyword>
<keyword id="KW-1162">Viral penetration into host cytoplasm</keyword>
<keyword id="KW-0946">Virion</keyword>
<keyword id="KW-1160">Virus entry into host cell</keyword>
<organism>
    <name type="scientific">Gallid herpesvirus 2 (strain Chicken/Md5/ATCC VR-987)</name>
    <name type="common">GaHV-2</name>
    <name type="synonym">Marek's disease herpesvirus type 1</name>
    <dbReference type="NCBI Taxonomy" id="10389"/>
    <lineage>
        <taxon>Viruses</taxon>
        <taxon>Duplodnaviria</taxon>
        <taxon>Heunggongvirae</taxon>
        <taxon>Peploviricota</taxon>
        <taxon>Herviviricetes</taxon>
        <taxon>Herpesvirales</taxon>
        <taxon>Orthoherpesviridae</taxon>
        <taxon>Alphaherpesvirinae</taxon>
        <taxon>Mardivirus</taxon>
        <taxon>Mardivirus gallidalpha2</taxon>
        <taxon>Gallid alphaherpesvirus 2</taxon>
    </lineage>
</organism>
<accession>Q77MS8</accession>